<dbReference type="EMBL" id="AAFI02000035">
    <property type="protein sequence ID" value="EAL67334.1"/>
    <property type="molecule type" value="Genomic_DNA"/>
</dbReference>
<dbReference type="RefSeq" id="XP_641311.1">
    <property type="nucleotide sequence ID" value="XM_636219.1"/>
</dbReference>
<dbReference type="SMR" id="Q54VP4"/>
<dbReference type="FunCoup" id="Q54VP4">
    <property type="interactions" value="128"/>
</dbReference>
<dbReference type="STRING" id="44689.Q54VP4"/>
<dbReference type="GlyGen" id="Q54VP4">
    <property type="glycosylation" value="1 site"/>
</dbReference>
<dbReference type="PaxDb" id="44689-DDB0232157"/>
<dbReference type="EnsemblProtists" id="EAL67334">
    <property type="protein sequence ID" value="EAL67334"/>
    <property type="gene ID" value="DDB_G0280215"/>
</dbReference>
<dbReference type="GeneID" id="8622443"/>
<dbReference type="KEGG" id="ddi:DDB_G0280215"/>
<dbReference type="dictyBase" id="DDB_G0280215">
    <property type="gene designation" value="hsp48"/>
</dbReference>
<dbReference type="VEuPathDB" id="AmoebaDB:DDB_G0280215"/>
<dbReference type="eggNOG" id="KOG0710">
    <property type="taxonomic scope" value="Eukaryota"/>
</dbReference>
<dbReference type="HOGENOM" id="CLU_661271_0_0_1"/>
<dbReference type="InParanoid" id="Q54VP4"/>
<dbReference type="OMA" id="MDWGWKP"/>
<dbReference type="CD-CODE" id="26D57712">
    <property type="entry name" value="HSP condensate"/>
</dbReference>
<dbReference type="PRO" id="PR:Q54VP4"/>
<dbReference type="Proteomes" id="UP000002195">
    <property type="component" value="Chromosome 3"/>
</dbReference>
<dbReference type="GO" id="GO:0005829">
    <property type="term" value="C:cytosol"/>
    <property type="evidence" value="ECO:0000314"/>
    <property type="project" value="dictyBase"/>
</dbReference>
<dbReference type="CDD" id="cd06464">
    <property type="entry name" value="ACD_sHsps-like"/>
    <property type="match status" value="1"/>
</dbReference>
<dbReference type="Gene3D" id="2.60.40.790">
    <property type="match status" value="1"/>
</dbReference>
<dbReference type="InterPro" id="IPR002068">
    <property type="entry name" value="A-crystallin/Hsp20_dom"/>
</dbReference>
<dbReference type="InterPro" id="IPR008978">
    <property type="entry name" value="HSP20-like_chaperone"/>
</dbReference>
<dbReference type="InterPro" id="IPR031107">
    <property type="entry name" value="Small_HSP"/>
</dbReference>
<dbReference type="PANTHER" id="PTHR11527">
    <property type="entry name" value="HEAT-SHOCK PROTEIN 20 FAMILY MEMBER"/>
    <property type="match status" value="1"/>
</dbReference>
<dbReference type="Pfam" id="PF00011">
    <property type="entry name" value="HSP20"/>
    <property type="match status" value="1"/>
</dbReference>
<dbReference type="SUPFAM" id="SSF49764">
    <property type="entry name" value="HSP20-like chaperones"/>
    <property type="match status" value="1"/>
</dbReference>
<dbReference type="PROSITE" id="PS01031">
    <property type="entry name" value="SHSP"/>
    <property type="match status" value="1"/>
</dbReference>
<accession>Q54VP4</accession>
<reference key="1">
    <citation type="journal article" date="2005" name="Nature">
        <title>The genome of the social amoeba Dictyostelium discoideum.</title>
        <authorList>
            <person name="Eichinger L."/>
            <person name="Pachebat J.A."/>
            <person name="Gloeckner G."/>
            <person name="Rajandream M.A."/>
            <person name="Sucgang R."/>
            <person name="Berriman M."/>
            <person name="Song J."/>
            <person name="Olsen R."/>
            <person name="Szafranski K."/>
            <person name="Xu Q."/>
            <person name="Tunggal B."/>
            <person name="Kummerfeld S."/>
            <person name="Madera M."/>
            <person name="Konfortov B.A."/>
            <person name="Rivero F."/>
            <person name="Bankier A.T."/>
            <person name="Lehmann R."/>
            <person name="Hamlin N."/>
            <person name="Davies R."/>
            <person name="Gaudet P."/>
            <person name="Fey P."/>
            <person name="Pilcher K."/>
            <person name="Chen G."/>
            <person name="Saunders D."/>
            <person name="Sodergren E.J."/>
            <person name="Davis P."/>
            <person name="Kerhornou A."/>
            <person name="Nie X."/>
            <person name="Hall N."/>
            <person name="Anjard C."/>
            <person name="Hemphill L."/>
            <person name="Bason N."/>
            <person name="Farbrother P."/>
            <person name="Desany B."/>
            <person name="Just E."/>
            <person name="Morio T."/>
            <person name="Rost R."/>
            <person name="Churcher C.M."/>
            <person name="Cooper J."/>
            <person name="Haydock S."/>
            <person name="van Driessche N."/>
            <person name="Cronin A."/>
            <person name="Goodhead I."/>
            <person name="Muzny D.M."/>
            <person name="Mourier T."/>
            <person name="Pain A."/>
            <person name="Lu M."/>
            <person name="Harper D."/>
            <person name="Lindsay R."/>
            <person name="Hauser H."/>
            <person name="James K.D."/>
            <person name="Quiles M."/>
            <person name="Madan Babu M."/>
            <person name="Saito T."/>
            <person name="Buchrieser C."/>
            <person name="Wardroper A."/>
            <person name="Felder M."/>
            <person name="Thangavelu M."/>
            <person name="Johnson D."/>
            <person name="Knights A."/>
            <person name="Loulseged H."/>
            <person name="Mungall K.L."/>
            <person name="Oliver K."/>
            <person name="Price C."/>
            <person name="Quail M.A."/>
            <person name="Urushihara H."/>
            <person name="Hernandez J."/>
            <person name="Rabbinowitsch E."/>
            <person name="Steffen D."/>
            <person name="Sanders M."/>
            <person name="Ma J."/>
            <person name="Kohara Y."/>
            <person name="Sharp S."/>
            <person name="Simmonds M.N."/>
            <person name="Spiegler S."/>
            <person name="Tivey A."/>
            <person name="Sugano S."/>
            <person name="White B."/>
            <person name="Walker D."/>
            <person name="Woodward J.R."/>
            <person name="Winckler T."/>
            <person name="Tanaka Y."/>
            <person name="Shaulsky G."/>
            <person name="Schleicher M."/>
            <person name="Weinstock G.M."/>
            <person name="Rosenthal A."/>
            <person name="Cox E.C."/>
            <person name="Chisholm R.L."/>
            <person name="Gibbs R.A."/>
            <person name="Loomis W.F."/>
            <person name="Platzer M."/>
            <person name="Kay R.R."/>
            <person name="Williams J.G."/>
            <person name="Dear P.H."/>
            <person name="Noegel A.A."/>
            <person name="Barrell B.G."/>
            <person name="Kuspa A."/>
        </authorList>
    </citation>
    <scope>NUCLEOTIDE SEQUENCE [LARGE SCALE GENOMIC DNA]</scope>
    <source>
        <strain>AX4</strain>
    </source>
</reference>
<gene>
    <name type="ORF">DDB_G0280215</name>
</gene>
<sequence>MSINWLTHPFEELSNLKHSLDETLKNWTEPAPTAATSMDWGWKPRMDVCENKDYYKIILELPSFNKDEIEVQVNGRFLSIKGQKIEHTTDEWKYHRRERYSGGEFHRAVALPEGIDGSSIQAKFQSGVLLLLIPKTGGKTSQHISLFGREEHGNKRNVIDLEEKERKRRMEESDPMLGRRWGTGRSLFSGSKLNNQNDTMYRKPSASDLRLVKQMETKERERRIRDTKGETEKKKNALKVSRYIKSLGMNPRSTLRRGGREMEKIIHLEERERQARIRDKGRMRQQQALAKKVSNLIKHSGGAARLRHTGFNYSTITKGYNTNKTKFDRFGKENDSFGGFNINKSFTNQFKGFGKNSGGKSINITTGGFKAPSQFNKFTHNLEEKERQRRLNDKKGQNDAKRLAAEISHMIGNAHF</sequence>
<feature type="chain" id="PRO_0000363910" description="Heat shock protein DDB_G0280215">
    <location>
        <begin position="1"/>
        <end position="416"/>
    </location>
</feature>
<feature type="domain" description="sHSP" evidence="1">
    <location>
        <begin position="37"/>
        <end position="150"/>
    </location>
</feature>
<feature type="region of interest" description="Disordered" evidence="2">
    <location>
        <begin position="216"/>
        <end position="235"/>
    </location>
</feature>
<proteinExistence type="inferred from homology"/>
<name>Y0215_DICDI</name>
<keyword id="KW-1185">Reference proteome</keyword>
<keyword id="KW-0346">Stress response</keyword>
<comment type="similarity">
    <text evidence="1">Belongs to the small heat shock protein (HSP20) family.</text>
</comment>
<organism>
    <name type="scientific">Dictyostelium discoideum</name>
    <name type="common">Social amoeba</name>
    <dbReference type="NCBI Taxonomy" id="44689"/>
    <lineage>
        <taxon>Eukaryota</taxon>
        <taxon>Amoebozoa</taxon>
        <taxon>Evosea</taxon>
        <taxon>Eumycetozoa</taxon>
        <taxon>Dictyostelia</taxon>
        <taxon>Dictyosteliales</taxon>
        <taxon>Dictyosteliaceae</taxon>
        <taxon>Dictyostelium</taxon>
    </lineage>
</organism>
<protein>
    <recommendedName>
        <fullName>Heat shock protein DDB_G0280215</fullName>
    </recommendedName>
</protein>
<evidence type="ECO:0000255" key="1">
    <source>
        <dbReference type="PROSITE-ProRule" id="PRU00285"/>
    </source>
</evidence>
<evidence type="ECO:0000256" key="2">
    <source>
        <dbReference type="SAM" id="MobiDB-lite"/>
    </source>
</evidence>